<gene>
    <name evidence="1" type="primary">ccmA</name>
    <name type="ordered locus">BR0094</name>
    <name type="ordered locus">BS1330_I0094</name>
</gene>
<proteinExistence type="inferred from homology"/>
<comment type="function">
    <text evidence="1">Part of the ABC transporter complex CcmAB involved in the biogenesis of c-type cytochromes; once thought to export heme, this seems not to be the case, but its exact role is uncertain. Responsible for energy coupling to the transport system.</text>
</comment>
<comment type="catalytic activity">
    <reaction evidence="1">
        <text>heme b(in) + ATP + H2O = heme b(out) + ADP + phosphate + H(+)</text>
        <dbReference type="Rhea" id="RHEA:19261"/>
        <dbReference type="ChEBI" id="CHEBI:15377"/>
        <dbReference type="ChEBI" id="CHEBI:15378"/>
        <dbReference type="ChEBI" id="CHEBI:30616"/>
        <dbReference type="ChEBI" id="CHEBI:43474"/>
        <dbReference type="ChEBI" id="CHEBI:60344"/>
        <dbReference type="ChEBI" id="CHEBI:456216"/>
        <dbReference type="EC" id="7.6.2.5"/>
    </reaction>
</comment>
<comment type="subunit">
    <text evidence="1">The complex is composed of two ATP-binding proteins (CcmA) and two transmembrane proteins (CcmB).</text>
</comment>
<comment type="subcellular location">
    <subcellularLocation>
        <location evidence="1">Cell inner membrane</location>
        <topology evidence="1">Peripheral membrane protein</topology>
    </subcellularLocation>
</comment>
<comment type="similarity">
    <text evidence="1">Belongs to the ABC transporter superfamily. CcmA exporter (TC 3.A.1.107) family.</text>
</comment>
<protein>
    <recommendedName>
        <fullName evidence="1">Cytochrome c biogenesis ATP-binding export protein CcmA</fullName>
        <ecNumber evidence="1">7.6.2.5</ecNumber>
    </recommendedName>
    <alternativeName>
        <fullName evidence="1">Heme exporter protein A</fullName>
    </alternativeName>
</protein>
<accession>Q8G358</accession>
<accession>G0KAZ1</accession>
<reference key="1">
    <citation type="journal article" date="2002" name="Proc. Natl. Acad. Sci. U.S.A.">
        <title>The Brucella suis genome reveals fundamental similarities between animal and plant pathogens and symbionts.</title>
        <authorList>
            <person name="Paulsen I.T."/>
            <person name="Seshadri R."/>
            <person name="Nelson K.E."/>
            <person name="Eisen J.A."/>
            <person name="Heidelberg J.F."/>
            <person name="Read T.D."/>
            <person name="Dodson R.J."/>
            <person name="Umayam L.A."/>
            <person name="Brinkac L.M."/>
            <person name="Beanan M.J."/>
            <person name="Daugherty S.C."/>
            <person name="DeBoy R.T."/>
            <person name="Durkin A.S."/>
            <person name="Kolonay J.F."/>
            <person name="Madupu R."/>
            <person name="Nelson W.C."/>
            <person name="Ayodeji B."/>
            <person name="Kraul M."/>
            <person name="Shetty J."/>
            <person name="Malek J.A."/>
            <person name="Van Aken S.E."/>
            <person name="Riedmuller S."/>
            <person name="Tettelin H."/>
            <person name="Gill S.R."/>
            <person name="White O."/>
            <person name="Salzberg S.L."/>
            <person name="Hoover D.L."/>
            <person name="Lindler L.E."/>
            <person name="Halling S.M."/>
            <person name="Boyle S.M."/>
            <person name="Fraser C.M."/>
        </authorList>
    </citation>
    <scope>NUCLEOTIDE SEQUENCE [LARGE SCALE GENOMIC DNA]</scope>
    <source>
        <strain>1330</strain>
    </source>
</reference>
<reference key="2">
    <citation type="journal article" date="2011" name="J. Bacteriol.">
        <title>Revised genome sequence of Brucella suis 1330.</title>
        <authorList>
            <person name="Tae H."/>
            <person name="Shallom S."/>
            <person name="Settlage R."/>
            <person name="Preston D."/>
            <person name="Adams L.G."/>
            <person name="Garner H.R."/>
        </authorList>
    </citation>
    <scope>NUCLEOTIDE SEQUENCE [LARGE SCALE GENOMIC DNA]</scope>
    <source>
        <strain>1330</strain>
    </source>
</reference>
<sequence>MRLEAENLAGERGGETIFSHLSFTIGTGQALVVTGPNGSGKSTLLRIICGLLAPEAGEVKLTEGTQIVPVRAACHYLGHQNAMKPALSVRENLLFWQKFNGGEALDIGAALEAVDLAGVEHLPFGYLSTGQKRRVSIAKLLVSHRPLWIVDEPTAGLDKASEARFAELMREHMRQDGMIIAATHIPLGLDGAISTTGNALVRSLDMAAFSVEDIA</sequence>
<dbReference type="EC" id="7.6.2.5" evidence="1"/>
<dbReference type="EMBL" id="AE014291">
    <property type="protein sequence ID" value="AAN29050.1"/>
    <property type="molecule type" value="Genomic_DNA"/>
</dbReference>
<dbReference type="EMBL" id="CP002997">
    <property type="protein sequence ID" value="AEM17462.1"/>
    <property type="molecule type" value="Genomic_DNA"/>
</dbReference>
<dbReference type="RefSeq" id="WP_002965342.1">
    <property type="nucleotide sequence ID" value="NZ_KN046804.1"/>
</dbReference>
<dbReference type="SMR" id="Q8G358"/>
<dbReference type="GeneID" id="97534484"/>
<dbReference type="KEGG" id="bms:BR0094"/>
<dbReference type="KEGG" id="bsi:BS1330_I0094"/>
<dbReference type="PATRIC" id="fig|204722.21.peg.1557"/>
<dbReference type="HOGENOM" id="CLU_000604_1_2_5"/>
<dbReference type="PhylomeDB" id="Q8G358"/>
<dbReference type="Proteomes" id="UP000007104">
    <property type="component" value="Chromosome I"/>
</dbReference>
<dbReference type="GO" id="GO:0005886">
    <property type="term" value="C:plasma membrane"/>
    <property type="evidence" value="ECO:0007669"/>
    <property type="project" value="UniProtKB-SubCell"/>
</dbReference>
<dbReference type="GO" id="GO:0015439">
    <property type="term" value="F:ABC-type heme transporter activity"/>
    <property type="evidence" value="ECO:0007669"/>
    <property type="project" value="UniProtKB-EC"/>
</dbReference>
<dbReference type="GO" id="GO:0005524">
    <property type="term" value="F:ATP binding"/>
    <property type="evidence" value="ECO:0007669"/>
    <property type="project" value="UniProtKB-KW"/>
</dbReference>
<dbReference type="GO" id="GO:0016887">
    <property type="term" value="F:ATP hydrolysis activity"/>
    <property type="evidence" value="ECO:0007669"/>
    <property type="project" value="InterPro"/>
</dbReference>
<dbReference type="GO" id="GO:0017004">
    <property type="term" value="P:cytochrome complex assembly"/>
    <property type="evidence" value="ECO:0007669"/>
    <property type="project" value="UniProtKB-KW"/>
</dbReference>
<dbReference type="CDD" id="cd03231">
    <property type="entry name" value="ABC_CcmA_heme_exporter"/>
    <property type="match status" value="1"/>
</dbReference>
<dbReference type="Gene3D" id="3.40.50.300">
    <property type="entry name" value="P-loop containing nucleotide triphosphate hydrolases"/>
    <property type="match status" value="1"/>
</dbReference>
<dbReference type="InterPro" id="IPR003593">
    <property type="entry name" value="AAA+_ATPase"/>
</dbReference>
<dbReference type="InterPro" id="IPR003439">
    <property type="entry name" value="ABC_transporter-like_ATP-bd"/>
</dbReference>
<dbReference type="InterPro" id="IPR005895">
    <property type="entry name" value="ABC_transptr_haem_export_CcmA"/>
</dbReference>
<dbReference type="InterPro" id="IPR027417">
    <property type="entry name" value="P-loop_NTPase"/>
</dbReference>
<dbReference type="NCBIfam" id="TIGR01189">
    <property type="entry name" value="ccmA"/>
    <property type="match status" value="1"/>
</dbReference>
<dbReference type="PANTHER" id="PTHR43499">
    <property type="entry name" value="ABC TRANSPORTER I FAMILY MEMBER 1"/>
    <property type="match status" value="1"/>
</dbReference>
<dbReference type="PANTHER" id="PTHR43499:SF1">
    <property type="entry name" value="ABC TRANSPORTER I FAMILY MEMBER 1"/>
    <property type="match status" value="1"/>
</dbReference>
<dbReference type="Pfam" id="PF00005">
    <property type="entry name" value="ABC_tran"/>
    <property type="match status" value="1"/>
</dbReference>
<dbReference type="SMART" id="SM00382">
    <property type="entry name" value="AAA"/>
    <property type="match status" value="1"/>
</dbReference>
<dbReference type="SUPFAM" id="SSF52540">
    <property type="entry name" value="P-loop containing nucleoside triphosphate hydrolases"/>
    <property type="match status" value="1"/>
</dbReference>
<dbReference type="PROSITE" id="PS50893">
    <property type="entry name" value="ABC_TRANSPORTER_2"/>
    <property type="match status" value="1"/>
</dbReference>
<dbReference type="PROSITE" id="PS51243">
    <property type="entry name" value="CCMA"/>
    <property type="match status" value="1"/>
</dbReference>
<evidence type="ECO:0000255" key="1">
    <source>
        <dbReference type="HAMAP-Rule" id="MF_01707"/>
    </source>
</evidence>
<name>CCMA_BRUSU</name>
<feature type="chain" id="PRO_0000092175" description="Cytochrome c biogenesis ATP-binding export protein CcmA">
    <location>
        <begin position="1"/>
        <end position="215"/>
    </location>
</feature>
<feature type="domain" description="ABC transporter" evidence="1">
    <location>
        <begin position="3"/>
        <end position="215"/>
    </location>
</feature>
<feature type="binding site" evidence="1">
    <location>
        <begin position="35"/>
        <end position="42"/>
    </location>
    <ligand>
        <name>ATP</name>
        <dbReference type="ChEBI" id="CHEBI:30616"/>
    </ligand>
</feature>
<keyword id="KW-0067">ATP-binding</keyword>
<keyword id="KW-0997">Cell inner membrane</keyword>
<keyword id="KW-1003">Cell membrane</keyword>
<keyword id="KW-0201">Cytochrome c-type biogenesis</keyword>
<keyword id="KW-0472">Membrane</keyword>
<keyword id="KW-0547">Nucleotide-binding</keyword>
<keyword id="KW-1278">Translocase</keyword>
<keyword id="KW-0813">Transport</keyword>
<organism>
    <name type="scientific">Brucella suis biovar 1 (strain 1330)</name>
    <dbReference type="NCBI Taxonomy" id="204722"/>
    <lineage>
        <taxon>Bacteria</taxon>
        <taxon>Pseudomonadati</taxon>
        <taxon>Pseudomonadota</taxon>
        <taxon>Alphaproteobacteria</taxon>
        <taxon>Hyphomicrobiales</taxon>
        <taxon>Brucellaceae</taxon>
        <taxon>Brucella/Ochrobactrum group</taxon>
        <taxon>Brucella</taxon>
    </lineage>
</organism>